<gene>
    <name evidence="1" type="primary">mshD</name>
    <name type="ordered locus">MUL_0436</name>
</gene>
<dbReference type="EC" id="2.3.1.189" evidence="1"/>
<dbReference type="EMBL" id="CP000325">
    <property type="protein sequence ID" value="ABL03146.1"/>
    <property type="molecule type" value="Genomic_DNA"/>
</dbReference>
<dbReference type="RefSeq" id="WP_011738771.1">
    <property type="nucleotide sequence ID" value="NC_008611.1"/>
</dbReference>
<dbReference type="SMR" id="A0PLC7"/>
<dbReference type="KEGG" id="mul:MUL_0436"/>
<dbReference type="eggNOG" id="COG0454">
    <property type="taxonomic scope" value="Bacteria"/>
</dbReference>
<dbReference type="eggNOG" id="COG0456">
    <property type="taxonomic scope" value="Bacteria"/>
</dbReference>
<dbReference type="HOGENOM" id="CLU_068014_0_0_11"/>
<dbReference type="Proteomes" id="UP000000765">
    <property type="component" value="Chromosome"/>
</dbReference>
<dbReference type="GO" id="GO:0035447">
    <property type="term" value="F:mycothiol synthase activity"/>
    <property type="evidence" value="ECO:0007669"/>
    <property type="project" value="UniProtKB-UniRule"/>
</dbReference>
<dbReference type="GO" id="GO:0008999">
    <property type="term" value="F:protein-N-terminal-alanine acetyltransferase activity"/>
    <property type="evidence" value="ECO:0007669"/>
    <property type="project" value="TreeGrafter"/>
</dbReference>
<dbReference type="GO" id="GO:0010125">
    <property type="term" value="P:mycothiol biosynthetic process"/>
    <property type="evidence" value="ECO:0007669"/>
    <property type="project" value="UniProtKB-UniRule"/>
</dbReference>
<dbReference type="CDD" id="cd04301">
    <property type="entry name" value="NAT_SF"/>
    <property type="match status" value="2"/>
</dbReference>
<dbReference type="Gene3D" id="3.40.630.30">
    <property type="match status" value="1"/>
</dbReference>
<dbReference type="HAMAP" id="MF_01698">
    <property type="entry name" value="MshD"/>
    <property type="match status" value="1"/>
</dbReference>
<dbReference type="InterPro" id="IPR016181">
    <property type="entry name" value="Acyl_CoA_acyltransferase"/>
</dbReference>
<dbReference type="InterPro" id="IPR000182">
    <property type="entry name" value="GNAT_dom"/>
</dbReference>
<dbReference type="InterPro" id="IPR050276">
    <property type="entry name" value="MshD_Acetyltransferase"/>
</dbReference>
<dbReference type="InterPro" id="IPR017813">
    <property type="entry name" value="Mycothiol_AcTrfase"/>
</dbReference>
<dbReference type="NCBIfam" id="TIGR03448">
    <property type="entry name" value="mycothiol_MshD"/>
    <property type="match status" value="1"/>
</dbReference>
<dbReference type="PANTHER" id="PTHR43617">
    <property type="entry name" value="L-AMINO ACID N-ACETYLTRANSFERASE"/>
    <property type="match status" value="1"/>
</dbReference>
<dbReference type="PANTHER" id="PTHR43617:SF31">
    <property type="entry name" value="MYCOTHIOL ACETYLTRANSFERASE"/>
    <property type="match status" value="1"/>
</dbReference>
<dbReference type="Pfam" id="PF00583">
    <property type="entry name" value="Acetyltransf_1"/>
    <property type="match status" value="2"/>
</dbReference>
<dbReference type="PIRSF" id="PIRSF021524">
    <property type="entry name" value="MSH_acetyltransferase"/>
    <property type="match status" value="1"/>
</dbReference>
<dbReference type="SUPFAM" id="SSF55729">
    <property type="entry name" value="Acyl-CoA N-acyltransferases (Nat)"/>
    <property type="match status" value="1"/>
</dbReference>
<dbReference type="PROSITE" id="PS51186">
    <property type="entry name" value="GNAT"/>
    <property type="match status" value="2"/>
</dbReference>
<sequence length="320" mass="34486">MTAGQWRSHLTDDQQRQVRDLVTVATQVDGVAPVGEQVLRELAQQRTEHLLVEDQSPGKSAIGYLNLSPAHGADAAMAELVVHPQARRRGIATAMVRAALAKTGGRNQFWAHGTLAPARATASALGLTPVRELVQMRRSLRQLPEPVIPNGLQIRTYAGTEDDAELLRVNNAAFAYHPEQGGWTEADLAERRGEPWFDPAGLFLALEGSEGAEDSPSGQPRLLGFHWTKIHLDDPGLGEVYVLGVDPAAQGRGLGRTLTMIGLRSLTQRLGDRDLGHESTVMLYVESDNIAAVRTYQGLGFSTHSVDTAYALAAPDAALA</sequence>
<proteinExistence type="inferred from homology"/>
<accession>A0PLC7</accession>
<feature type="chain" id="PRO_0000400282" description="Mycothiol acetyltransferase">
    <location>
        <begin position="1"/>
        <end position="320"/>
    </location>
</feature>
<feature type="domain" description="N-acetyltransferase 1" evidence="1">
    <location>
        <begin position="8"/>
        <end position="141"/>
    </location>
</feature>
<feature type="domain" description="N-acetyltransferase 2" evidence="1">
    <location>
        <begin position="152"/>
        <end position="320"/>
    </location>
</feature>
<feature type="binding site" evidence="1">
    <location>
        <position position="36"/>
    </location>
    <ligand>
        <name>1D-myo-inositol 2-(L-cysteinylamino)-2-deoxy-alpha-D-glucopyranoside</name>
        <dbReference type="ChEBI" id="CHEBI:58887"/>
    </ligand>
</feature>
<feature type="binding site" evidence="1">
    <location>
        <begin position="80"/>
        <end position="82"/>
    </location>
    <ligand>
        <name>acetyl-CoA</name>
        <dbReference type="ChEBI" id="CHEBI:57288"/>
        <label>1</label>
    </ligand>
</feature>
<feature type="binding site" evidence="1">
    <location>
        <begin position="88"/>
        <end position="93"/>
    </location>
    <ligand>
        <name>acetyl-CoA</name>
        <dbReference type="ChEBI" id="CHEBI:57288"/>
        <label>1</label>
    </ligand>
</feature>
<feature type="binding site" evidence="1">
    <location>
        <position position="179"/>
    </location>
    <ligand>
        <name>1D-myo-inositol 2-(L-cysteinylamino)-2-deoxy-alpha-D-glucopyranoside</name>
        <dbReference type="ChEBI" id="CHEBI:58887"/>
    </ligand>
</feature>
<feature type="binding site" evidence="1">
    <location>
        <position position="229"/>
    </location>
    <ligand>
        <name>1D-myo-inositol 2-(L-cysteinylamino)-2-deoxy-alpha-D-glucopyranoside</name>
        <dbReference type="ChEBI" id="CHEBI:58887"/>
    </ligand>
</feature>
<feature type="binding site" evidence="1">
    <location>
        <position position="239"/>
    </location>
    <ligand>
        <name>1D-myo-inositol 2-(L-cysteinylamino)-2-deoxy-alpha-D-glucopyranoside</name>
        <dbReference type="ChEBI" id="CHEBI:58887"/>
    </ligand>
</feature>
<feature type="binding site" evidence="1">
    <location>
        <begin position="243"/>
        <end position="245"/>
    </location>
    <ligand>
        <name>acetyl-CoA</name>
        <dbReference type="ChEBI" id="CHEBI:57288"/>
        <label>2</label>
    </ligand>
</feature>
<feature type="binding site" evidence="1">
    <location>
        <begin position="250"/>
        <end position="256"/>
    </location>
    <ligand>
        <name>acetyl-CoA</name>
        <dbReference type="ChEBI" id="CHEBI:57288"/>
        <label>2</label>
    </ligand>
</feature>
<feature type="binding site" evidence="1">
    <location>
        <position position="284"/>
    </location>
    <ligand>
        <name>1D-myo-inositol 2-(L-cysteinylamino)-2-deoxy-alpha-D-glucopyranoside</name>
        <dbReference type="ChEBI" id="CHEBI:58887"/>
    </ligand>
</feature>
<feature type="binding site" evidence="1">
    <location>
        <begin position="289"/>
        <end position="294"/>
    </location>
    <ligand>
        <name>acetyl-CoA</name>
        <dbReference type="ChEBI" id="CHEBI:57288"/>
        <label>2</label>
    </ligand>
</feature>
<comment type="function">
    <text evidence="1">Catalyzes the transfer of acetyl from acetyl-CoA to desacetylmycothiol (Cys-GlcN-Ins) to form mycothiol.</text>
</comment>
<comment type="catalytic activity">
    <reaction evidence="1">
        <text>1D-myo-inositol 2-(L-cysteinylamino)-2-deoxy-alpha-D-glucopyranoside + acetyl-CoA = mycothiol + CoA + H(+)</text>
        <dbReference type="Rhea" id="RHEA:26172"/>
        <dbReference type="ChEBI" id="CHEBI:15378"/>
        <dbReference type="ChEBI" id="CHEBI:16768"/>
        <dbReference type="ChEBI" id="CHEBI:57287"/>
        <dbReference type="ChEBI" id="CHEBI:57288"/>
        <dbReference type="ChEBI" id="CHEBI:58887"/>
        <dbReference type="EC" id="2.3.1.189"/>
    </reaction>
</comment>
<comment type="subunit">
    <text evidence="1">Monomer.</text>
</comment>
<comment type="similarity">
    <text evidence="1">Belongs to the acetyltransferase family. MshD subfamily.</text>
</comment>
<reference key="1">
    <citation type="journal article" date="2007" name="Genome Res.">
        <title>Reductive evolution and niche adaptation inferred from the genome of Mycobacterium ulcerans, the causative agent of Buruli ulcer.</title>
        <authorList>
            <person name="Stinear T.P."/>
            <person name="Seemann T."/>
            <person name="Pidot S."/>
            <person name="Frigui W."/>
            <person name="Reysset G."/>
            <person name="Garnier T."/>
            <person name="Meurice G."/>
            <person name="Simon D."/>
            <person name="Bouchier C."/>
            <person name="Ma L."/>
            <person name="Tichit M."/>
            <person name="Porter J.L."/>
            <person name="Ryan J."/>
            <person name="Johnson P.D.R."/>
            <person name="Davies J.K."/>
            <person name="Jenkin G.A."/>
            <person name="Small P.L.C."/>
            <person name="Jones L.M."/>
            <person name="Tekaia F."/>
            <person name="Laval F."/>
            <person name="Daffe M."/>
            <person name="Parkhill J."/>
            <person name="Cole S.T."/>
        </authorList>
    </citation>
    <scope>NUCLEOTIDE SEQUENCE [LARGE SCALE GENOMIC DNA]</scope>
    <source>
        <strain>Agy99</strain>
    </source>
</reference>
<name>MSHD_MYCUA</name>
<protein>
    <recommendedName>
        <fullName evidence="1">Mycothiol acetyltransferase</fullName>
        <shortName evidence="1">MSH acetyltransferase</shortName>
        <ecNumber evidence="1">2.3.1.189</ecNumber>
    </recommendedName>
    <alternativeName>
        <fullName evidence="1">Mycothiol synthase</fullName>
    </alternativeName>
</protein>
<evidence type="ECO:0000255" key="1">
    <source>
        <dbReference type="HAMAP-Rule" id="MF_01698"/>
    </source>
</evidence>
<keyword id="KW-0012">Acyltransferase</keyword>
<keyword id="KW-0677">Repeat</keyword>
<keyword id="KW-0808">Transferase</keyword>
<organism>
    <name type="scientific">Mycobacterium ulcerans (strain Agy99)</name>
    <dbReference type="NCBI Taxonomy" id="362242"/>
    <lineage>
        <taxon>Bacteria</taxon>
        <taxon>Bacillati</taxon>
        <taxon>Actinomycetota</taxon>
        <taxon>Actinomycetes</taxon>
        <taxon>Mycobacteriales</taxon>
        <taxon>Mycobacteriaceae</taxon>
        <taxon>Mycobacterium</taxon>
        <taxon>Mycobacterium ulcerans group</taxon>
    </lineage>
</organism>